<proteinExistence type="inferred from homology"/>
<dbReference type="EMBL" id="CP000577">
    <property type="protein sequence ID" value="ABN77614.1"/>
    <property type="molecule type" value="Genomic_DNA"/>
</dbReference>
<dbReference type="RefSeq" id="WP_011841716.1">
    <property type="nucleotide sequence ID" value="NC_009049.1"/>
</dbReference>
<dbReference type="KEGG" id="rsh:Rsph17029_2512"/>
<dbReference type="HOGENOM" id="CLU_106619_2_1_5"/>
<dbReference type="HAMAP" id="MF_00489">
    <property type="entry name" value="UPF0178"/>
    <property type="match status" value="1"/>
</dbReference>
<dbReference type="InterPro" id="IPR003791">
    <property type="entry name" value="UPF0178"/>
</dbReference>
<dbReference type="NCBIfam" id="NF001095">
    <property type="entry name" value="PRK00124.1"/>
    <property type="match status" value="1"/>
</dbReference>
<dbReference type="PANTHER" id="PTHR35146">
    <property type="entry name" value="UPF0178 PROTEIN YAII"/>
    <property type="match status" value="1"/>
</dbReference>
<dbReference type="PANTHER" id="PTHR35146:SF1">
    <property type="entry name" value="UPF0178 PROTEIN YAII"/>
    <property type="match status" value="1"/>
</dbReference>
<dbReference type="Pfam" id="PF02639">
    <property type="entry name" value="DUF188"/>
    <property type="match status" value="1"/>
</dbReference>
<sequence>MTDLYIDADACPVKAEAERVAVRHGVRMFLVSNGGIRPPAHPLVESIFVPEGPDVADMWIADRARTGDVVVTSDIPLAAKVVAAGALVVKPNGETLTTANIGNALATRDLMADLRSADPFRQGGGRTFSKADRSRFLDALERAMRKAQEAGRSASGGSEAGS</sequence>
<protein>
    <recommendedName>
        <fullName evidence="1">UPF0178 protein Rsph17029_2512</fullName>
    </recommendedName>
</protein>
<evidence type="ECO:0000255" key="1">
    <source>
        <dbReference type="HAMAP-Rule" id="MF_00489"/>
    </source>
</evidence>
<name>Y2512_CERS1</name>
<feature type="chain" id="PRO_1000014438" description="UPF0178 protein Rsph17029_2512">
    <location>
        <begin position="1"/>
        <end position="162"/>
    </location>
</feature>
<accession>A3PMP8</accession>
<reference key="1">
    <citation type="submission" date="2007-02" db="EMBL/GenBank/DDBJ databases">
        <title>Complete sequence of chromosome 1 of Rhodobacter sphaeroides ATCC 17029.</title>
        <authorList>
            <person name="Copeland A."/>
            <person name="Lucas S."/>
            <person name="Lapidus A."/>
            <person name="Barry K."/>
            <person name="Detter J.C."/>
            <person name="Glavina del Rio T."/>
            <person name="Hammon N."/>
            <person name="Israni S."/>
            <person name="Dalin E."/>
            <person name="Tice H."/>
            <person name="Pitluck S."/>
            <person name="Kiss H."/>
            <person name="Brettin T."/>
            <person name="Bruce D."/>
            <person name="Han C."/>
            <person name="Tapia R."/>
            <person name="Gilna P."/>
            <person name="Schmutz J."/>
            <person name="Larimer F."/>
            <person name="Land M."/>
            <person name="Hauser L."/>
            <person name="Kyrpides N."/>
            <person name="Mikhailova N."/>
            <person name="Richardson P."/>
            <person name="Mackenzie C."/>
            <person name="Choudhary M."/>
            <person name="Donohue T.J."/>
            <person name="Kaplan S."/>
        </authorList>
    </citation>
    <scope>NUCLEOTIDE SEQUENCE [LARGE SCALE GENOMIC DNA]</scope>
    <source>
        <strain>ATCC 17029 / ATH 2.4.9</strain>
    </source>
</reference>
<organism>
    <name type="scientific">Cereibacter sphaeroides (strain ATCC 17029 / ATH 2.4.9)</name>
    <name type="common">Rhodobacter sphaeroides</name>
    <dbReference type="NCBI Taxonomy" id="349101"/>
    <lineage>
        <taxon>Bacteria</taxon>
        <taxon>Pseudomonadati</taxon>
        <taxon>Pseudomonadota</taxon>
        <taxon>Alphaproteobacteria</taxon>
        <taxon>Rhodobacterales</taxon>
        <taxon>Paracoccaceae</taxon>
        <taxon>Cereibacter</taxon>
    </lineage>
</organism>
<gene>
    <name type="ordered locus">Rsph17029_2512</name>
</gene>
<comment type="similarity">
    <text evidence="1">Belongs to the UPF0178 family.</text>
</comment>